<evidence type="ECO:0000250" key="1"/>
<evidence type="ECO:0000305" key="2"/>
<gene>
    <name type="primary">COG6</name>
    <name type="ORF">MGG_09558</name>
</gene>
<comment type="function">
    <text evidence="1">Acts as a component of the peripheral membrane COG complex that is involved in intra-Golgi protein trafficking. COG is located at the cis-Golgi, and regulates tethering of retrograde intra-Golgi vesicles and possibly a number of other membrane trafficking events (By similarity).</text>
</comment>
<comment type="subcellular location">
    <subcellularLocation>
        <location evidence="1">Golgi apparatus membrane</location>
        <topology evidence="1">Peripheral membrane protein</topology>
    </subcellularLocation>
</comment>
<comment type="similarity">
    <text evidence="2">Belongs to the COG6 family.</text>
</comment>
<organism>
    <name type="scientific">Pyricularia oryzae (strain 70-15 / ATCC MYA-4617 / FGSC 8958)</name>
    <name type="common">Rice blast fungus</name>
    <name type="synonym">Magnaporthe oryzae</name>
    <dbReference type="NCBI Taxonomy" id="242507"/>
    <lineage>
        <taxon>Eukaryota</taxon>
        <taxon>Fungi</taxon>
        <taxon>Dikarya</taxon>
        <taxon>Ascomycota</taxon>
        <taxon>Pezizomycotina</taxon>
        <taxon>Sordariomycetes</taxon>
        <taxon>Sordariomycetidae</taxon>
        <taxon>Magnaporthales</taxon>
        <taxon>Pyriculariaceae</taxon>
        <taxon>Pyricularia</taxon>
    </lineage>
</organism>
<proteinExistence type="inferred from homology"/>
<protein>
    <recommendedName>
        <fullName>Conserved oligomeric Golgi complex subunit 6</fullName>
        <shortName>COG complex subunit 6</shortName>
    </recommendedName>
    <alternativeName>
        <fullName>Component of oligomeric Golgi complex 6</fullName>
    </alternativeName>
</protein>
<dbReference type="EMBL" id="CM001233">
    <property type="protein sequence ID" value="EHA52376.1"/>
    <property type="molecule type" value="Genomic_DNA"/>
</dbReference>
<dbReference type="RefSeq" id="XP_003712183.1">
    <property type="nucleotide sequence ID" value="XM_003712135.1"/>
</dbReference>
<dbReference type="SMR" id="A4QUK5"/>
<dbReference type="FunCoup" id="A4QUK5">
    <property type="interactions" value="253"/>
</dbReference>
<dbReference type="STRING" id="242507.A4QUK5"/>
<dbReference type="EnsemblFungi" id="MGG_09558T0">
    <property type="protein sequence ID" value="MGG_09558T0"/>
    <property type="gene ID" value="MGG_09558"/>
</dbReference>
<dbReference type="GeneID" id="2680456"/>
<dbReference type="KEGG" id="mgr:MGG_09558"/>
<dbReference type="VEuPathDB" id="FungiDB:MGG_09558"/>
<dbReference type="eggNOG" id="KOG3758">
    <property type="taxonomic scope" value="Eukaryota"/>
</dbReference>
<dbReference type="HOGENOM" id="CLU_011361_1_0_1"/>
<dbReference type="InParanoid" id="A4QUK5"/>
<dbReference type="OMA" id="HSCLDFF"/>
<dbReference type="OrthoDB" id="272987at2759"/>
<dbReference type="Proteomes" id="UP000009058">
    <property type="component" value="Chromosome 3"/>
</dbReference>
<dbReference type="GO" id="GO:0000139">
    <property type="term" value="C:Golgi membrane"/>
    <property type="evidence" value="ECO:0007669"/>
    <property type="project" value="UniProtKB-SubCell"/>
</dbReference>
<dbReference type="GO" id="GO:0017119">
    <property type="term" value="C:Golgi transport complex"/>
    <property type="evidence" value="ECO:0007669"/>
    <property type="project" value="InterPro"/>
</dbReference>
<dbReference type="GO" id="GO:0006891">
    <property type="term" value="P:intra-Golgi vesicle-mediated transport"/>
    <property type="evidence" value="ECO:0007669"/>
    <property type="project" value="InterPro"/>
</dbReference>
<dbReference type="GO" id="GO:0015031">
    <property type="term" value="P:protein transport"/>
    <property type="evidence" value="ECO:0007669"/>
    <property type="project" value="UniProtKB-KW"/>
</dbReference>
<dbReference type="InterPro" id="IPR010490">
    <property type="entry name" value="COG6"/>
</dbReference>
<dbReference type="InterPro" id="IPR048369">
    <property type="entry name" value="COG6_C"/>
</dbReference>
<dbReference type="InterPro" id="IPR048368">
    <property type="entry name" value="COG6_N"/>
</dbReference>
<dbReference type="PANTHER" id="PTHR21506">
    <property type="entry name" value="COMPONENT OF OLIGOMERIC GOLGI COMPLEX 6"/>
    <property type="match status" value="1"/>
</dbReference>
<dbReference type="PANTHER" id="PTHR21506:SF0">
    <property type="entry name" value="CONSERVED OLIGOMERIC GOLGI COMPLEX SUBUNIT 6"/>
    <property type="match status" value="1"/>
</dbReference>
<dbReference type="Pfam" id="PF20653">
    <property type="entry name" value="COG6_C"/>
    <property type="match status" value="1"/>
</dbReference>
<dbReference type="Pfam" id="PF06419">
    <property type="entry name" value="COG6_N"/>
    <property type="match status" value="1"/>
</dbReference>
<dbReference type="SMART" id="SM01087">
    <property type="entry name" value="COG6"/>
    <property type="match status" value="1"/>
</dbReference>
<keyword id="KW-0333">Golgi apparatus</keyword>
<keyword id="KW-0472">Membrane</keyword>
<keyword id="KW-0653">Protein transport</keyword>
<keyword id="KW-1185">Reference proteome</keyword>
<keyword id="KW-0813">Transport</keyword>
<name>COG6_PYRO7</name>
<accession>A4QUK5</accession>
<accession>G4N1A5</accession>
<feature type="chain" id="PRO_0000339324" description="Conserved oligomeric Golgi complex subunit 6">
    <location>
        <begin position="1"/>
        <end position="704"/>
    </location>
</feature>
<sequence>MASAAFKETDMAGALSPVSSQTTNSSSLKGLSTLSSKVTSVLSTSYADSEFRDALSLLDSRGIQNTAEARRRLRLDLHREVIDSNGEIIDEFGRVADQLRRIGNTLEKLNNSYAEMKTQVTKAHECTSPVLQEASTLIAQKRQVEIKQRLLKSFSGHFLLPEDEVAILTLTSEPVDDRFFNVLAKARRIRKDCEILLGFENQTSGLQIMEQTSRNLDLAFQKLYRWIQREFKTLNLESPQLGSAIRRALRALAERPSLFQNCLDFFAEARENVLSDAFFTALTGTTSGGTVDHSVKPIEMAAHDPLRYVGDMLAWSHSATVSEREALEVLFVSDGDAIAKGIRSGRDTEVWRLVAEDGEEAPEFDPIKALNELVDRNVSGAARLLRQRVEQVIQTNEETILAYKLANLLGFYRVMFAKLLTEESILVECIRNLEAEALRQFRSLMRDYIANLQGEFQHVPPTLEPPDFLVPSLQQLDAIMKTYETSLTASGDREADFQPILAEALDPFIAGCRNIGKALAPPKDSVFLINCLMAIKRVLMPFDFAKGRVEELGEEIGRESSKLSESQYLFFREASGLAEVFDAVQSLTDKPEDVERVRTLAPLAPAALVHASQRLDDFLPSALLDALENIKYLQDSTMARKITEEAAEKFCLNFEHVEYILMYADESAGQTPQAERSSEDDYGGPQLLRTLFPRTTEEIRVLLS</sequence>
<reference key="1">
    <citation type="journal article" date="2005" name="Nature">
        <title>The genome sequence of the rice blast fungus Magnaporthe grisea.</title>
        <authorList>
            <person name="Dean R.A."/>
            <person name="Talbot N.J."/>
            <person name="Ebbole D.J."/>
            <person name="Farman M.L."/>
            <person name="Mitchell T.K."/>
            <person name="Orbach M.J."/>
            <person name="Thon M.R."/>
            <person name="Kulkarni R."/>
            <person name="Xu J.-R."/>
            <person name="Pan H."/>
            <person name="Read N.D."/>
            <person name="Lee Y.-H."/>
            <person name="Carbone I."/>
            <person name="Brown D."/>
            <person name="Oh Y.Y."/>
            <person name="Donofrio N."/>
            <person name="Jeong J.S."/>
            <person name="Soanes D.M."/>
            <person name="Djonovic S."/>
            <person name="Kolomiets E."/>
            <person name="Rehmeyer C."/>
            <person name="Li W."/>
            <person name="Harding M."/>
            <person name="Kim S."/>
            <person name="Lebrun M.-H."/>
            <person name="Bohnert H."/>
            <person name="Coughlan S."/>
            <person name="Butler J."/>
            <person name="Calvo S.E."/>
            <person name="Ma L.-J."/>
            <person name="Nicol R."/>
            <person name="Purcell S."/>
            <person name="Nusbaum C."/>
            <person name="Galagan J.E."/>
            <person name="Birren B.W."/>
        </authorList>
    </citation>
    <scope>NUCLEOTIDE SEQUENCE [LARGE SCALE GENOMIC DNA]</scope>
    <source>
        <strain>70-15 / ATCC MYA-4617 / FGSC 8958</strain>
    </source>
</reference>